<feature type="chain" id="PRO_0000302853" description="Coiled-coil domain-containing protein 17">
    <location>
        <begin position="1"/>
        <end position="565"/>
    </location>
</feature>
<feature type="region of interest" description="Disordered" evidence="2">
    <location>
        <begin position="58"/>
        <end position="87"/>
    </location>
</feature>
<feature type="coiled-coil region" evidence="1">
    <location>
        <begin position="97"/>
        <end position="160"/>
    </location>
</feature>
<feature type="coiled-coil region" evidence="1">
    <location>
        <begin position="219"/>
        <end position="271"/>
    </location>
</feature>
<accession>Q8CE13</accession>
<accession>B0QZT6</accession>
<accession>Q8BTE7</accession>
<name>CCD17_MOUSE</name>
<protein>
    <recommendedName>
        <fullName>Coiled-coil domain-containing protein 17</fullName>
    </recommendedName>
</protein>
<comment type="sequence caution" evidence="3">
    <conflict type="erroneous gene model prediction">
        <sequence resource="EMBL-CDS" id="CAQ11117"/>
    </conflict>
</comment>
<reference key="1">
    <citation type="journal article" date="2005" name="Science">
        <title>The transcriptional landscape of the mammalian genome.</title>
        <authorList>
            <person name="Carninci P."/>
            <person name="Kasukawa T."/>
            <person name="Katayama S."/>
            <person name="Gough J."/>
            <person name="Frith M.C."/>
            <person name="Maeda N."/>
            <person name="Oyama R."/>
            <person name="Ravasi T."/>
            <person name="Lenhard B."/>
            <person name="Wells C."/>
            <person name="Kodzius R."/>
            <person name="Shimokawa K."/>
            <person name="Bajic V.B."/>
            <person name="Brenner S.E."/>
            <person name="Batalov S."/>
            <person name="Forrest A.R."/>
            <person name="Zavolan M."/>
            <person name="Davis M.J."/>
            <person name="Wilming L.G."/>
            <person name="Aidinis V."/>
            <person name="Allen J.E."/>
            <person name="Ambesi-Impiombato A."/>
            <person name="Apweiler R."/>
            <person name="Aturaliya R.N."/>
            <person name="Bailey T.L."/>
            <person name="Bansal M."/>
            <person name="Baxter L."/>
            <person name="Beisel K.W."/>
            <person name="Bersano T."/>
            <person name="Bono H."/>
            <person name="Chalk A.M."/>
            <person name="Chiu K.P."/>
            <person name="Choudhary V."/>
            <person name="Christoffels A."/>
            <person name="Clutterbuck D.R."/>
            <person name="Crowe M.L."/>
            <person name="Dalla E."/>
            <person name="Dalrymple B.P."/>
            <person name="de Bono B."/>
            <person name="Della Gatta G."/>
            <person name="di Bernardo D."/>
            <person name="Down T."/>
            <person name="Engstrom P."/>
            <person name="Fagiolini M."/>
            <person name="Faulkner G."/>
            <person name="Fletcher C.F."/>
            <person name="Fukushima T."/>
            <person name="Furuno M."/>
            <person name="Futaki S."/>
            <person name="Gariboldi M."/>
            <person name="Georgii-Hemming P."/>
            <person name="Gingeras T.R."/>
            <person name="Gojobori T."/>
            <person name="Green R.E."/>
            <person name="Gustincich S."/>
            <person name="Harbers M."/>
            <person name="Hayashi Y."/>
            <person name="Hensch T.K."/>
            <person name="Hirokawa N."/>
            <person name="Hill D."/>
            <person name="Huminiecki L."/>
            <person name="Iacono M."/>
            <person name="Ikeo K."/>
            <person name="Iwama A."/>
            <person name="Ishikawa T."/>
            <person name="Jakt M."/>
            <person name="Kanapin A."/>
            <person name="Katoh M."/>
            <person name="Kawasawa Y."/>
            <person name="Kelso J."/>
            <person name="Kitamura H."/>
            <person name="Kitano H."/>
            <person name="Kollias G."/>
            <person name="Krishnan S.P."/>
            <person name="Kruger A."/>
            <person name="Kummerfeld S.K."/>
            <person name="Kurochkin I.V."/>
            <person name="Lareau L.F."/>
            <person name="Lazarevic D."/>
            <person name="Lipovich L."/>
            <person name="Liu J."/>
            <person name="Liuni S."/>
            <person name="McWilliam S."/>
            <person name="Madan Babu M."/>
            <person name="Madera M."/>
            <person name="Marchionni L."/>
            <person name="Matsuda H."/>
            <person name="Matsuzawa S."/>
            <person name="Miki H."/>
            <person name="Mignone F."/>
            <person name="Miyake S."/>
            <person name="Morris K."/>
            <person name="Mottagui-Tabar S."/>
            <person name="Mulder N."/>
            <person name="Nakano N."/>
            <person name="Nakauchi H."/>
            <person name="Ng P."/>
            <person name="Nilsson R."/>
            <person name="Nishiguchi S."/>
            <person name="Nishikawa S."/>
            <person name="Nori F."/>
            <person name="Ohara O."/>
            <person name="Okazaki Y."/>
            <person name="Orlando V."/>
            <person name="Pang K.C."/>
            <person name="Pavan W.J."/>
            <person name="Pavesi G."/>
            <person name="Pesole G."/>
            <person name="Petrovsky N."/>
            <person name="Piazza S."/>
            <person name="Reed J."/>
            <person name="Reid J.F."/>
            <person name="Ring B.Z."/>
            <person name="Ringwald M."/>
            <person name="Rost B."/>
            <person name="Ruan Y."/>
            <person name="Salzberg S.L."/>
            <person name="Sandelin A."/>
            <person name="Schneider C."/>
            <person name="Schoenbach C."/>
            <person name="Sekiguchi K."/>
            <person name="Semple C.A."/>
            <person name="Seno S."/>
            <person name="Sessa L."/>
            <person name="Sheng Y."/>
            <person name="Shibata Y."/>
            <person name="Shimada H."/>
            <person name="Shimada K."/>
            <person name="Silva D."/>
            <person name="Sinclair B."/>
            <person name="Sperling S."/>
            <person name="Stupka E."/>
            <person name="Sugiura K."/>
            <person name="Sultana R."/>
            <person name="Takenaka Y."/>
            <person name="Taki K."/>
            <person name="Tammoja K."/>
            <person name="Tan S.L."/>
            <person name="Tang S."/>
            <person name="Taylor M.S."/>
            <person name="Tegner J."/>
            <person name="Teichmann S.A."/>
            <person name="Ueda H.R."/>
            <person name="van Nimwegen E."/>
            <person name="Verardo R."/>
            <person name="Wei C.L."/>
            <person name="Yagi K."/>
            <person name="Yamanishi H."/>
            <person name="Zabarovsky E."/>
            <person name="Zhu S."/>
            <person name="Zimmer A."/>
            <person name="Hide W."/>
            <person name="Bult C."/>
            <person name="Grimmond S.M."/>
            <person name="Teasdale R.D."/>
            <person name="Liu E.T."/>
            <person name="Brusic V."/>
            <person name="Quackenbush J."/>
            <person name="Wahlestedt C."/>
            <person name="Mattick J.S."/>
            <person name="Hume D.A."/>
            <person name="Kai C."/>
            <person name="Sasaki D."/>
            <person name="Tomaru Y."/>
            <person name="Fukuda S."/>
            <person name="Kanamori-Katayama M."/>
            <person name="Suzuki M."/>
            <person name="Aoki J."/>
            <person name="Arakawa T."/>
            <person name="Iida J."/>
            <person name="Imamura K."/>
            <person name="Itoh M."/>
            <person name="Kato T."/>
            <person name="Kawaji H."/>
            <person name="Kawagashira N."/>
            <person name="Kawashima T."/>
            <person name="Kojima M."/>
            <person name="Kondo S."/>
            <person name="Konno H."/>
            <person name="Nakano K."/>
            <person name="Ninomiya N."/>
            <person name="Nishio T."/>
            <person name="Okada M."/>
            <person name="Plessy C."/>
            <person name="Shibata K."/>
            <person name="Shiraki T."/>
            <person name="Suzuki S."/>
            <person name="Tagami M."/>
            <person name="Waki K."/>
            <person name="Watahiki A."/>
            <person name="Okamura-Oho Y."/>
            <person name="Suzuki H."/>
            <person name="Kawai J."/>
            <person name="Hayashizaki Y."/>
        </authorList>
    </citation>
    <scope>NUCLEOTIDE SEQUENCE [LARGE SCALE MRNA]</scope>
    <source>
        <strain>C57BL/6J</strain>
        <tissue>Embryo</tissue>
        <tissue>Head</tissue>
    </source>
</reference>
<reference key="2">
    <citation type="journal article" date="2009" name="PLoS Biol.">
        <title>Lineage-specific biology revealed by a finished genome assembly of the mouse.</title>
        <authorList>
            <person name="Church D.M."/>
            <person name="Goodstadt L."/>
            <person name="Hillier L.W."/>
            <person name="Zody M.C."/>
            <person name="Goldstein S."/>
            <person name="She X."/>
            <person name="Bult C.J."/>
            <person name="Agarwala R."/>
            <person name="Cherry J.L."/>
            <person name="DiCuccio M."/>
            <person name="Hlavina W."/>
            <person name="Kapustin Y."/>
            <person name="Meric P."/>
            <person name="Maglott D."/>
            <person name="Birtle Z."/>
            <person name="Marques A.C."/>
            <person name="Graves T."/>
            <person name="Zhou S."/>
            <person name="Teague B."/>
            <person name="Potamousis K."/>
            <person name="Churas C."/>
            <person name="Place M."/>
            <person name="Herschleb J."/>
            <person name="Runnheim R."/>
            <person name="Forrest D."/>
            <person name="Amos-Landgraf J."/>
            <person name="Schwartz D.C."/>
            <person name="Cheng Z."/>
            <person name="Lindblad-Toh K."/>
            <person name="Eichler E.E."/>
            <person name="Ponting C.P."/>
        </authorList>
    </citation>
    <scope>NUCLEOTIDE SEQUENCE [LARGE SCALE GENOMIC DNA]</scope>
    <source>
        <strain>C57BL/6J</strain>
    </source>
</reference>
<organism>
    <name type="scientific">Mus musculus</name>
    <name type="common">Mouse</name>
    <dbReference type="NCBI Taxonomy" id="10090"/>
    <lineage>
        <taxon>Eukaryota</taxon>
        <taxon>Metazoa</taxon>
        <taxon>Chordata</taxon>
        <taxon>Craniata</taxon>
        <taxon>Vertebrata</taxon>
        <taxon>Euteleostomi</taxon>
        <taxon>Mammalia</taxon>
        <taxon>Eutheria</taxon>
        <taxon>Euarchontoglires</taxon>
        <taxon>Glires</taxon>
        <taxon>Rodentia</taxon>
        <taxon>Myomorpha</taxon>
        <taxon>Muroidea</taxon>
        <taxon>Muridae</taxon>
        <taxon>Murinae</taxon>
        <taxon>Mus</taxon>
        <taxon>Mus</taxon>
    </lineage>
</organism>
<evidence type="ECO:0000255" key="1"/>
<evidence type="ECO:0000256" key="2">
    <source>
        <dbReference type="SAM" id="MobiDB-lite"/>
    </source>
</evidence>
<evidence type="ECO:0000305" key="3"/>
<gene>
    <name type="primary">Ccdc17</name>
</gene>
<keyword id="KW-0175">Coiled coil</keyword>
<keyword id="KW-1185">Reference proteome</keyword>
<dbReference type="EMBL" id="AK003161">
    <property type="protein sequence ID" value="BAC25021.1"/>
    <property type="molecule type" value="mRNA"/>
</dbReference>
<dbReference type="EMBL" id="AK029257">
    <property type="protein sequence ID" value="BAC26359.1"/>
    <property type="molecule type" value="mRNA"/>
</dbReference>
<dbReference type="EMBL" id="AL669953">
    <property type="protein sequence ID" value="CAQ11117.1"/>
    <property type="status" value="ALT_SEQ"/>
    <property type="molecule type" value="Genomic_DNA"/>
</dbReference>
<dbReference type="CCDS" id="CCDS18512.1"/>
<dbReference type="RefSeq" id="NP_001033005.1">
    <property type="nucleotide sequence ID" value="NM_001037916.3"/>
</dbReference>
<dbReference type="SMR" id="Q8CE13"/>
<dbReference type="FunCoup" id="Q8CE13">
    <property type="interactions" value="2"/>
</dbReference>
<dbReference type="STRING" id="10090.ENSMUSP00000059848"/>
<dbReference type="iPTMnet" id="Q8CE13"/>
<dbReference type="PhosphoSitePlus" id="Q8CE13"/>
<dbReference type="PaxDb" id="10090-ENSMUSP00000059848"/>
<dbReference type="ProteomicsDB" id="265704"/>
<dbReference type="Antibodypedia" id="51288">
    <property type="antibodies" value="114 antibodies from 18 providers"/>
</dbReference>
<dbReference type="Ensembl" id="ENSMUST00000051869.8">
    <property type="protein sequence ID" value="ENSMUSP00000059848.8"/>
    <property type="gene ID" value="ENSMUSG00000034035.19"/>
</dbReference>
<dbReference type="GeneID" id="622665"/>
<dbReference type="KEGG" id="mmu:622665"/>
<dbReference type="UCSC" id="uc008ugu.1">
    <property type="organism name" value="mouse"/>
</dbReference>
<dbReference type="AGR" id="MGI:1915667"/>
<dbReference type="CTD" id="149483"/>
<dbReference type="MGI" id="MGI:1915667">
    <property type="gene designation" value="Ccdc17"/>
</dbReference>
<dbReference type="VEuPathDB" id="HostDB:ENSMUSG00000034035"/>
<dbReference type="eggNOG" id="ENOG502QR6M">
    <property type="taxonomic scope" value="Eukaryota"/>
</dbReference>
<dbReference type="GeneTree" id="ENSGT00390000006459"/>
<dbReference type="HOGENOM" id="CLU_040615_0_0_1"/>
<dbReference type="InParanoid" id="Q8CE13"/>
<dbReference type="OMA" id="ICELQAW"/>
<dbReference type="OrthoDB" id="289416at2759"/>
<dbReference type="PhylomeDB" id="Q8CE13"/>
<dbReference type="TreeFam" id="TF335390"/>
<dbReference type="BioGRID-ORCS" id="622665">
    <property type="hits" value="5 hits in 76 CRISPR screens"/>
</dbReference>
<dbReference type="ChiTaRS" id="Ccdc17">
    <property type="organism name" value="mouse"/>
</dbReference>
<dbReference type="PRO" id="PR:Q8CE13"/>
<dbReference type="Proteomes" id="UP000000589">
    <property type="component" value="Chromosome 4"/>
</dbReference>
<dbReference type="RNAct" id="Q8CE13">
    <property type="molecule type" value="protein"/>
</dbReference>
<dbReference type="Bgee" id="ENSMUSG00000034035">
    <property type="expression patterns" value="Expressed in right kidney and 76 other cell types or tissues"/>
</dbReference>
<dbReference type="InterPro" id="IPR038800">
    <property type="entry name" value="CCDC17"/>
</dbReference>
<dbReference type="PANTHER" id="PTHR33820">
    <property type="entry name" value="COILED-COIL DOMAIN-CONTAINING PROTEIN 17"/>
    <property type="match status" value="1"/>
</dbReference>
<dbReference type="PANTHER" id="PTHR33820:SF4">
    <property type="entry name" value="COILED-COIL DOMAIN-CONTAINING PROTEIN 17"/>
    <property type="match status" value="1"/>
</dbReference>
<sequence length="565" mass="62536">MADYSGESGLLSCESCDMVFRSWALLATHTKRFCIGRLTPEVTLKSQPSVAIKRGTKIMAQEKSRDQEASTSALKRLTEETAGSPGERLRVLQGTRARRMAETEAQSRALERRGEELKRRLHSVAGPKGGLPRPFDLERELRELKEEANRTRGALQTLGAHFQALQLQPRKLQDTHRAVEFCYLPLRFNPETLAAEIRILREAYVHGGGRDPEVLDKILQLQVEASALELQRSQNRKEKLSAASEEVLTVEAENRLLEAEILALQKQKVLSLSPWGSRDLPGHLSRCDNSLLPPLVAPPIPQLTSSTKAQNFHGTSKTILNGTMTRKMGLDLHFLLPASDVLGPAPYDPGAGLVIFYDFLRGLDTSWIWVQLMTSLARNGQDTGGTTALPPALCLPQPSAPGPMGNCAILASKQPVPRLPPSPLVSLICELQAWHGVTWAPQPKAWASLLLFDQDLRVLRGRWRLPLRVYPNTSLSLAQRNEIPQAGQAELFLRLVNARDTDAQTLAEINPANAHEYQYPPMVSSSSVESSFFTHSSAFADPPPPTEEAFVSVKDKNEHLSPHQF</sequence>
<proteinExistence type="evidence at transcript level"/>